<reference key="1">
    <citation type="journal article" date="2004" name="Zool. Sci.">
        <title>Evolution and biogeography of talpid moles from continental East Asia and the Japanese islands inferred from mitochondrial and nuclear gene sequences.</title>
        <authorList>
            <person name="Shinohara A."/>
            <person name="Suzuki H."/>
            <person name="Tsuchiya K."/>
            <person name="Zhang Y.P."/>
            <person name="Luo J."/>
            <person name="Jiang X.L."/>
            <person name="Wang Y.X."/>
            <person name="Campbell K.L."/>
        </authorList>
    </citation>
    <scope>NUCLEOTIDE SEQUENCE [GENOMIC DNA]</scope>
    <source>
        <strain>97268</strain>
    </source>
</reference>
<sequence>MINIRKTHPLMKIINNSFIDLPAPSNISSWWNFGSLLGICLILQILTGLFLAMHYTSDTMTAFSSVTHICRDVNYGWLIRYLHANGASMFFICLFLHVGRGMYYGSYMFMETWNIGVLLLFAVMATAFMGYVLPWGQMSFWGATVITNLLSAIPYIGTDLVEWIWGGFSVDKATLTRFFAFHFILPFIVAALAGVHLLFLHETGSNNPSGLTSDSDKIPFHPYYTIKDILGALVLILALSTLVLFSPDLLGDPDNYIPANPLNTPPHIKPEWYFLFAYAILRSIPNKLGGVLALVLSILVLALMPVLHTSKQRSMMFRPISQCLFWLLVADLLTLTWIGGQPVEHPFIIIGQLASILYFSLILVLMPLASLLENNLLKW</sequence>
<name>CYB_SCAFU</name>
<proteinExistence type="inferred from homology"/>
<comment type="function">
    <text evidence="2">Component of the ubiquinol-cytochrome c reductase complex (complex III or cytochrome b-c1 complex) that is part of the mitochondrial respiratory chain. The b-c1 complex mediates electron transfer from ubiquinol to cytochrome c. Contributes to the generation of a proton gradient across the mitochondrial membrane that is then used for ATP synthesis.</text>
</comment>
<comment type="cofactor">
    <cofactor evidence="2">
        <name>heme b</name>
        <dbReference type="ChEBI" id="CHEBI:60344"/>
    </cofactor>
    <text evidence="2">Binds 2 heme b groups non-covalently.</text>
</comment>
<comment type="subunit">
    <text evidence="2">The cytochrome bc1 complex contains 11 subunits: 3 respiratory subunits (MT-CYB, CYC1 and UQCRFS1), 2 core proteins (UQCRC1 and UQCRC2) and 6 low-molecular weight proteins (UQCRH/QCR6, UQCRB/QCR7, UQCRQ/QCR8, UQCR10/QCR9, UQCR11/QCR10 and a cleavage product of UQCRFS1). This cytochrome bc1 complex then forms a dimer.</text>
</comment>
<comment type="subcellular location">
    <subcellularLocation>
        <location evidence="2">Mitochondrion inner membrane</location>
        <topology evidence="2">Multi-pass membrane protein</topology>
    </subcellularLocation>
</comment>
<comment type="miscellaneous">
    <text evidence="1">Heme 1 (or BL or b562) is low-potential and absorbs at about 562 nm, and heme 2 (or BH or b566) is high-potential and absorbs at about 566 nm.</text>
</comment>
<comment type="similarity">
    <text evidence="3 4">Belongs to the cytochrome b family.</text>
</comment>
<comment type="caution">
    <text evidence="2">The full-length protein contains only eight transmembrane helices, not nine as predicted by bioinformatics tools.</text>
</comment>
<organism>
    <name type="scientific">Scaptonyx fusicauda</name>
    <name type="common">Long-tailed mole</name>
    <dbReference type="NCBI Taxonomy" id="3370766"/>
    <lineage>
        <taxon>Eukaryota</taxon>
        <taxon>Metazoa</taxon>
        <taxon>Chordata</taxon>
        <taxon>Craniata</taxon>
        <taxon>Vertebrata</taxon>
        <taxon>Euteleostomi</taxon>
        <taxon>Mammalia</taxon>
        <taxon>Eutheria</taxon>
        <taxon>Laurasiatheria</taxon>
        <taxon>Eulipotyphla</taxon>
        <taxon>Talpidae</taxon>
        <taxon>Scaptonyx</taxon>
    </lineage>
</organism>
<feature type="chain" id="PRO_0000061523" description="Cytochrome b">
    <location>
        <begin position="1"/>
        <end position="379"/>
    </location>
</feature>
<feature type="transmembrane region" description="Helical" evidence="2">
    <location>
        <begin position="33"/>
        <end position="53"/>
    </location>
</feature>
<feature type="transmembrane region" description="Helical" evidence="2">
    <location>
        <begin position="77"/>
        <end position="98"/>
    </location>
</feature>
<feature type="transmembrane region" description="Helical" evidence="2">
    <location>
        <begin position="113"/>
        <end position="133"/>
    </location>
</feature>
<feature type="transmembrane region" description="Helical" evidence="2">
    <location>
        <begin position="178"/>
        <end position="198"/>
    </location>
</feature>
<feature type="transmembrane region" description="Helical" evidence="2">
    <location>
        <begin position="226"/>
        <end position="246"/>
    </location>
</feature>
<feature type="transmembrane region" description="Helical" evidence="2">
    <location>
        <begin position="288"/>
        <end position="308"/>
    </location>
</feature>
<feature type="transmembrane region" description="Helical" evidence="2">
    <location>
        <begin position="320"/>
        <end position="340"/>
    </location>
</feature>
<feature type="transmembrane region" description="Helical" evidence="2">
    <location>
        <begin position="347"/>
        <end position="367"/>
    </location>
</feature>
<feature type="binding site" description="axial binding residue" evidence="2">
    <location>
        <position position="83"/>
    </location>
    <ligand>
        <name>heme b</name>
        <dbReference type="ChEBI" id="CHEBI:60344"/>
        <label>b562</label>
    </ligand>
    <ligandPart>
        <name>Fe</name>
        <dbReference type="ChEBI" id="CHEBI:18248"/>
    </ligandPart>
</feature>
<feature type="binding site" description="axial binding residue" evidence="2">
    <location>
        <position position="97"/>
    </location>
    <ligand>
        <name>heme b</name>
        <dbReference type="ChEBI" id="CHEBI:60344"/>
        <label>b566</label>
    </ligand>
    <ligandPart>
        <name>Fe</name>
        <dbReference type="ChEBI" id="CHEBI:18248"/>
    </ligandPart>
</feature>
<feature type="binding site" description="axial binding residue" evidence="2">
    <location>
        <position position="182"/>
    </location>
    <ligand>
        <name>heme b</name>
        <dbReference type="ChEBI" id="CHEBI:60344"/>
        <label>b562</label>
    </ligand>
    <ligandPart>
        <name>Fe</name>
        <dbReference type="ChEBI" id="CHEBI:18248"/>
    </ligandPart>
</feature>
<feature type="binding site" description="axial binding residue" evidence="2">
    <location>
        <position position="196"/>
    </location>
    <ligand>
        <name>heme b</name>
        <dbReference type="ChEBI" id="CHEBI:60344"/>
        <label>b566</label>
    </ligand>
    <ligandPart>
        <name>Fe</name>
        <dbReference type="ChEBI" id="CHEBI:18248"/>
    </ligandPart>
</feature>
<feature type="binding site" evidence="2">
    <location>
        <position position="201"/>
    </location>
    <ligand>
        <name>a ubiquinone</name>
        <dbReference type="ChEBI" id="CHEBI:16389"/>
    </ligand>
</feature>
<gene>
    <name type="primary">MT-CYB</name>
    <name type="synonym">COB</name>
    <name type="synonym">CYTB</name>
    <name type="synonym">MTCYB</name>
</gene>
<geneLocation type="mitochondrion"/>
<evidence type="ECO:0000250" key="1"/>
<evidence type="ECO:0000250" key="2">
    <source>
        <dbReference type="UniProtKB" id="P00157"/>
    </source>
</evidence>
<evidence type="ECO:0000255" key="3">
    <source>
        <dbReference type="PROSITE-ProRule" id="PRU00967"/>
    </source>
</evidence>
<evidence type="ECO:0000255" key="4">
    <source>
        <dbReference type="PROSITE-ProRule" id="PRU00968"/>
    </source>
</evidence>
<protein>
    <recommendedName>
        <fullName>Cytochrome b</fullName>
    </recommendedName>
    <alternativeName>
        <fullName>Complex III subunit 3</fullName>
    </alternativeName>
    <alternativeName>
        <fullName>Complex III subunit III</fullName>
    </alternativeName>
    <alternativeName>
        <fullName>Cytochrome b-c1 complex subunit 3</fullName>
    </alternativeName>
    <alternativeName>
        <fullName>Ubiquinol-cytochrome-c reductase complex cytochrome b subunit</fullName>
    </alternativeName>
</protein>
<keyword id="KW-0249">Electron transport</keyword>
<keyword id="KW-0349">Heme</keyword>
<keyword id="KW-0408">Iron</keyword>
<keyword id="KW-0472">Membrane</keyword>
<keyword id="KW-0479">Metal-binding</keyword>
<keyword id="KW-0496">Mitochondrion</keyword>
<keyword id="KW-0999">Mitochondrion inner membrane</keyword>
<keyword id="KW-0679">Respiratory chain</keyword>
<keyword id="KW-0812">Transmembrane</keyword>
<keyword id="KW-1133">Transmembrane helix</keyword>
<keyword id="KW-0813">Transport</keyword>
<keyword id="KW-0830">Ubiquinone</keyword>
<dbReference type="EMBL" id="AB106229">
    <property type="protein sequence ID" value="BAD90544.1"/>
    <property type="molecule type" value="Genomic_DNA"/>
</dbReference>
<dbReference type="SMR" id="Q5DX17"/>
<dbReference type="GO" id="GO:0005743">
    <property type="term" value="C:mitochondrial inner membrane"/>
    <property type="evidence" value="ECO:0007669"/>
    <property type="project" value="UniProtKB-SubCell"/>
</dbReference>
<dbReference type="GO" id="GO:0045275">
    <property type="term" value="C:respiratory chain complex III"/>
    <property type="evidence" value="ECO:0007669"/>
    <property type="project" value="InterPro"/>
</dbReference>
<dbReference type="GO" id="GO:0046872">
    <property type="term" value="F:metal ion binding"/>
    <property type="evidence" value="ECO:0007669"/>
    <property type="project" value="UniProtKB-KW"/>
</dbReference>
<dbReference type="GO" id="GO:0008121">
    <property type="term" value="F:ubiquinol-cytochrome-c reductase activity"/>
    <property type="evidence" value="ECO:0007669"/>
    <property type="project" value="InterPro"/>
</dbReference>
<dbReference type="GO" id="GO:0006122">
    <property type="term" value="P:mitochondrial electron transport, ubiquinol to cytochrome c"/>
    <property type="evidence" value="ECO:0007669"/>
    <property type="project" value="TreeGrafter"/>
</dbReference>
<dbReference type="CDD" id="cd00290">
    <property type="entry name" value="cytochrome_b_C"/>
    <property type="match status" value="1"/>
</dbReference>
<dbReference type="CDD" id="cd00284">
    <property type="entry name" value="Cytochrome_b_N"/>
    <property type="match status" value="1"/>
</dbReference>
<dbReference type="FunFam" id="1.20.810.10:FF:000002">
    <property type="entry name" value="Cytochrome b"/>
    <property type="match status" value="1"/>
</dbReference>
<dbReference type="Gene3D" id="1.20.810.10">
    <property type="entry name" value="Cytochrome Bc1 Complex, Chain C"/>
    <property type="match status" value="1"/>
</dbReference>
<dbReference type="InterPro" id="IPR005798">
    <property type="entry name" value="Cyt_b/b6_C"/>
</dbReference>
<dbReference type="InterPro" id="IPR036150">
    <property type="entry name" value="Cyt_b/b6_C_sf"/>
</dbReference>
<dbReference type="InterPro" id="IPR005797">
    <property type="entry name" value="Cyt_b/b6_N"/>
</dbReference>
<dbReference type="InterPro" id="IPR027387">
    <property type="entry name" value="Cytb/b6-like_sf"/>
</dbReference>
<dbReference type="InterPro" id="IPR030689">
    <property type="entry name" value="Cytochrome_b"/>
</dbReference>
<dbReference type="InterPro" id="IPR048260">
    <property type="entry name" value="Cytochrome_b_C_euk/bac"/>
</dbReference>
<dbReference type="InterPro" id="IPR048259">
    <property type="entry name" value="Cytochrome_b_N_euk/bac"/>
</dbReference>
<dbReference type="InterPro" id="IPR016174">
    <property type="entry name" value="Di-haem_cyt_TM"/>
</dbReference>
<dbReference type="PANTHER" id="PTHR19271">
    <property type="entry name" value="CYTOCHROME B"/>
    <property type="match status" value="1"/>
</dbReference>
<dbReference type="PANTHER" id="PTHR19271:SF16">
    <property type="entry name" value="CYTOCHROME B"/>
    <property type="match status" value="1"/>
</dbReference>
<dbReference type="Pfam" id="PF00032">
    <property type="entry name" value="Cytochrom_B_C"/>
    <property type="match status" value="1"/>
</dbReference>
<dbReference type="Pfam" id="PF00033">
    <property type="entry name" value="Cytochrome_B"/>
    <property type="match status" value="1"/>
</dbReference>
<dbReference type="PIRSF" id="PIRSF038885">
    <property type="entry name" value="COB"/>
    <property type="match status" value="1"/>
</dbReference>
<dbReference type="SUPFAM" id="SSF81648">
    <property type="entry name" value="a domain/subunit of cytochrome bc1 complex (Ubiquinol-cytochrome c reductase)"/>
    <property type="match status" value="1"/>
</dbReference>
<dbReference type="SUPFAM" id="SSF81342">
    <property type="entry name" value="Transmembrane di-heme cytochromes"/>
    <property type="match status" value="1"/>
</dbReference>
<dbReference type="PROSITE" id="PS51003">
    <property type="entry name" value="CYTB_CTER"/>
    <property type="match status" value="1"/>
</dbReference>
<dbReference type="PROSITE" id="PS51002">
    <property type="entry name" value="CYTB_NTER"/>
    <property type="match status" value="1"/>
</dbReference>
<accession>Q5DX17</accession>